<feature type="signal peptide" evidence="1">
    <location>
        <begin position="1"/>
        <end position="22"/>
    </location>
</feature>
<feature type="propeptide" id="PRO_0000430420" evidence="8">
    <location>
        <begin position="23"/>
        <end position="46"/>
    </location>
</feature>
<feature type="peptide" id="PRO_0000430421" description="Alpha-conotoxin GeXIVA" evidence="9">
    <location>
        <begin position="47"/>
        <end position="74"/>
    </location>
</feature>
<feature type="region of interest" description="Interacts with alpha-9-alpha-10 (CHRNA9-CHRNA10) nAChR" evidence="3">
    <location>
        <begin position="56"/>
        <end position="64"/>
    </location>
</feature>
<feature type="mutagenesis site" description="In [C2A;C9A;C20S;C27S] GeXIVA; important increase in specificity towards alpha-9-alpha-10/CHRNA9-CHRNA10 nAChR; when associated with A-55; S-66 and S-73." evidence="5">
    <original>C</original>
    <variation>A</variation>
    <location>
        <position position="48"/>
    </location>
</feature>
<feature type="mutagenesis site" description="In [C2A;C9A;C20S;C27S] GeXIVA; important increase in specificity towards alpha-9-alpha-10/CHRNA9-CHRNA10 nAChR; when associated with A-48; S-66 and S-73." evidence="5">
    <original>C</original>
    <variation>A</variation>
    <location>
        <position position="55"/>
    </location>
</feature>
<feature type="mutagenesis site" description="In [C2A;C9A;C20S;C27S] GeXIVA; important increase in specificity towards alpha-9-alpha-10/CHRNA9-CHRNA10 nAChR; when associated with A-48; A-55 and S-73." evidence="5">
    <original>C</original>
    <variation>S</variation>
    <location>
        <position position="66"/>
    </location>
</feature>
<feature type="mutagenesis site" description="4-fold decrease in inhibition of alpha-9-alpha-10 (CHRNA9-CHRNA10) nAChR (ribbon isomer (I-IV; II-III))." evidence="3">
    <original>D</original>
    <variation>A</variation>
    <variation>N</variation>
    <location>
        <position position="71"/>
    </location>
</feature>
<feature type="mutagenesis site" description="In [C2A;C9A;C20S;C27S] GeXIVA; important increase in specificity towards alpha-9-alpha-10/CHRNA9-CHRNA10 nAChR; when associated with A-48; A-55 and S-66." evidence="5">
    <original>C</original>
    <variation>S</variation>
    <location>
        <position position="73"/>
    </location>
</feature>
<feature type="sequence conflict" description="In Ref. 1; AFP87476." ref="1">
    <original>R</original>
    <variation>C</variation>
    <location>
        <position position="61"/>
    </location>
</feature>
<name>CO1EA_CONGR</name>
<reference key="1">
    <citation type="journal article" date="2013" name="Appl. Microbiol. Biotechnol.">
        <title>Expression, renaturation and biological activity of recombinant conotoxin GeXIVAWT.</title>
        <authorList>
            <person name="Gao B."/>
            <person name="Zhangsun D."/>
            <person name="Wu Y."/>
            <person name="Lin B."/>
            <person name="Zhu X."/>
            <person name="Luo S."/>
        </authorList>
    </citation>
    <scope>NUCLEOTIDE SEQUENCE [MRNA]</scope>
    <scope>SYNTHESIS OF 47-74</scope>
    <scope>FUNCTION</scope>
    <source>
        <tissue>Venom duct</tissue>
    </source>
</reference>
<reference key="2">
    <citation type="journal article" date="2015" name="Proc. Natl. Acad. Sci. U.S.A.">
        <title>Cloning, synthesis, and characterization of alpha-O-conotoxin GeXIVA, a potent alpha9alpha10 nicotinic acetylcholine receptor antagonist.</title>
        <authorList>
            <person name="Luo S."/>
            <person name="Zhangsun D."/>
            <person name="Harvey P.J."/>
            <person name="Kaas Q."/>
            <person name="Wu Y."/>
            <person name="Zhu X."/>
            <person name="Hu Y."/>
            <person name="Li X."/>
            <person name="Tsetlin V.I."/>
            <person name="Christensen S."/>
            <person name="Romero H.K."/>
            <person name="McIntyre M."/>
            <person name="Dowell C."/>
            <person name="Baxter J.C."/>
            <person name="Elmslie K.S."/>
            <person name="Craik D.J."/>
            <person name="McIntosh J.M."/>
        </authorList>
    </citation>
    <scope>NUCLEOTIDE SEQUENCE [MRNA]</scope>
    <scope>SYNTHESIS OF 47-74 (BEAD</scope>
    <scope>RIBBON AND GLOBULAR ISOMERS)</scope>
    <scope>FUNCTION</scope>
    <scope>3D-STRUCTURE MODELING (RIBBON ISOMER (I-IV; II-III))</scope>
    <scope>MUTAGENESIS OF ASP-71</scope>
    <scope>PHARMACEUTICAL</scope>
    <source>
        <tissue>Venom duct</tissue>
    </source>
</reference>
<reference key="3">
    <citation type="journal article" date="2016" name="Prog. Neuro-Psychopharmacol. Biol. Psychiatry">
        <title>Anti-hypersensitive effect of intramuscular administration of alphaO-conotoxin GeXIVA[1,2] and GeXIVA[1,4] in rats of neuropathic pain.</title>
        <authorList>
            <person name="Li X."/>
            <person name="Hu Y."/>
            <person name="Wu Y."/>
            <person name="Huang Y."/>
            <person name="Yu S."/>
            <person name="Ding Q."/>
            <person name="Zhangsun D."/>
            <person name="Luo S."/>
        </authorList>
    </citation>
    <scope>BIOASSAY IN RAT PAIN MODEL</scope>
    <scope>PHARMACEUTICAL</scope>
</reference>
<reference key="4">
    <citation type="journal article" date="2020" name="J. Med. Chem.">
        <title>Structure and activity studies of disulfide-deficient analogues of alphaO-Conotoxin GeXIVA.</title>
        <authorList>
            <person name="Xu P."/>
            <person name="Kaas Q."/>
            <person name="Wu Y."/>
            <person name="Zhu X."/>
            <person name="Li X."/>
            <person name="Harvey P.J."/>
            <person name="Zhangsun D."/>
            <person name="Craik D.J."/>
            <person name="Luo S."/>
        </authorList>
    </citation>
    <scope>FUNCTION</scope>
    <scope>MUTAGENESIS OF CYS-48; CYS-55; CYS-66 AND CYS-73</scope>
    <scope>3D-STRUCTURE MODELING</scope>
</reference>
<keyword id="KW-0008">Acetylcholine receptor inhibiting toxin</keyword>
<keyword id="KW-1015">Disulfide bond</keyword>
<keyword id="KW-0528">Neurotoxin</keyword>
<keyword id="KW-0582">Pharmaceutical</keyword>
<keyword id="KW-0629">Postsynaptic neurotoxin</keyword>
<keyword id="KW-0964">Secreted</keyword>
<keyword id="KW-0732">Signal</keyword>
<keyword id="KW-0800">Toxin</keyword>
<organism>
    <name type="scientific">Conus generalis</name>
    <name type="common">General cone</name>
    <dbReference type="NCBI Taxonomy" id="101304"/>
    <lineage>
        <taxon>Eukaryota</taxon>
        <taxon>Metazoa</taxon>
        <taxon>Spiralia</taxon>
        <taxon>Lophotrochozoa</taxon>
        <taxon>Mollusca</taxon>
        <taxon>Gastropoda</taxon>
        <taxon>Caenogastropoda</taxon>
        <taxon>Neogastropoda</taxon>
        <taxon>Conoidea</taxon>
        <taxon>Conidae</taxon>
        <taxon>Conus</taxon>
        <taxon>Strategoconus</taxon>
    </lineage>
</organism>
<evidence type="ECO:0000255" key="1"/>
<evidence type="ECO:0000269" key="2">
    <source>
    </source>
</evidence>
<evidence type="ECO:0000269" key="3">
    <source>
    </source>
</evidence>
<evidence type="ECO:0000269" key="4">
    <source>
    </source>
</evidence>
<evidence type="ECO:0000269" key="5">
    <source>
    </source>
</evidence>
<evidence type="ECO:0000303" key="6">
    <source>
    </source>
</evidence>
<evidence type="ECO:0000303" key="7">
    <source>
    </source>
</evidence>
<evidence type="ECO:0000305" key="8"/>
<evidence type="ECO:0000305" key="9">
    <source>
    </source>
</evidence>
<evidence type="ECO:0000312" key="10">
    <source>
        <dbReference type="EMBL" id="AFP87476.1"/>
    </source>
</evidence>
<protein>
    <recommendedName>
        <fullName evidence="8">Alpha-conotoxin GeXIVA</fullName>
    </recommendedName>
    <alternativeName>
        <fullName evidence="7">Alpha-O-conotoxin GeXIVA</fullName>
    </alternativeName>
    <alternativeName>
        <fullName evidence="10">Conotoxin Ge14.1</fullName>
    </alternativeName>
    <alternativeName>
        <fullName evidence="6">Conotoxin GeXIVAWT</fullName>
    </alternativeName>
</protein>
<comment type="function">
    <text evidence="2 3 4 5">Alpha-conotoxins act on postsynaptic membranes, they bind to the nicotinic acetylcholine receptors (nAChR) and thus inhibit them. This toxin is very potent on alpha-9-alpha-10/CHRNA9-CHRNA10 nAChR (IC(50)=4.61-12 nM for the bead isomer (I-II; III-IV), IC(50)=7-16 nM for the ribbon isomer (I-IV; II-III) and IC(50)=22.7 nM for the globular isomer (I-III; II-IV)) (PubMed:26170295, PubMed:31986036). The bead isomer also shows a weak inhibition on other nAChRs (alpha-1-beta-1-delta-epsilon/CHRNA1-CHRNB1-CHRND-CHRNE, alpha-7/CHRNA7, alpha-6/alpha-3-beta-2-beta-3 (CHRNA6/CHRNA3-CHRNB2-CHRNB3), alpha-3-beta-2/CHRNA3-CHRNB2, alpha-2-beta-2/CHRNA2-CHRNB2, alpha-6/alpha-3-beta-4 (CHRNA6/CHRNA3-CHRNB4), alpha-4-beta-2/CHRNA4-CHRNB2, alpha-4-beta-4/CHRNA4-CHRNB4, alpha-2-beta-4/CHRNA2-CHRNB4, alpha-3-beta-4/CHRNA3-CHRNB4) (PubMed:26170295, PubMed:31986036). The toxin blockade is voltage-dependent, and its binding site does not overlap with the binding site of the competitive antagonist alpha-conotoxin RgIA (PubMed:26170295). The toxin inhibits Sf9 cell growth (PubMed:22825834). Both the bead and ribbon isomers relieve pain effects in the rat chronic constriction injury (CCI) model of neuropathic pain, and in the acute pain model of tail flick test, but have no effect on motor performance (PubMed:26170295, PubMed:26706456).</text>
</comment>
<comment type="subcellular location">
    <subcellularLocation>
        <location evidence="9">Secreted</location>
    </subcellularLocation>
</comment>
<comment type="tissue specificity">
    <text evidence="9">Expressed by the venom duct.</text>
</comment>
<comment type="domain">
    <text evidence="8">The cysteine framework is XIV (C-C-C-C).</text>
</comment>
<comment type="PTM">
    <text evidence="3 5">The native disulfide bond pairing has not been studied. Three isomers may exist: the bead isomer (I-II; III-IV), the globular isomer (I-III; II-IV), the ribbon isomer (I-IV; II-III). They have all been synthesized and their activity tested (PubMed:26170295). All of them show similar potency on alpha-9-alpha-10 (CHRNA9-CHRNA10) nAChR, showing that disulfide bonds does not significantly affect their activity (PubMed:26170295). In addition, removal of disulfide bonds does not affect the activity on alpha-9-alpha-10 (CHRNA9-CHRNA10) nAChR either (PubMed:31986036).</text>
</comment>
<comment type="pharmaceutical">
    <text evidence="3 4">Is a promising analgesic drug candidate. It shows analgesic effect without the development of tolerance and retains its effect two weeks after drug withdrawal.</text>
</comment>
<comment type="miscellaneous">
    <text evidence="3">Negative results: this toxin (both bead (I-II; III-IV) and ribbon (I-IV; II-III) isomers) does not inhibit voltage-gated calcium channels from DRG neurons (Cav1.2/CACNA1C, Cav2.1/CACNA1A, Cav2.2/CACNA1B and Cav2.3/CACNA1E).</text>
</comment>
<comment type="similarity">
    <text evidence="8">Belongs to the conotoxin O1 superfamily.</text>
</comment>
<dbReference type="EMBL" id="JX198170">
    <property type="protein sequence ID" value="AFP87476.1"/>
    <property type="molecule type" value="mRNA"/>
</dbReference>
<dbReference type="EMBL" id="KP793740">
    <property type="protein sequence ID" value="AKB95553.1"/>
    <property type="molecule type" value="mRNA"/>
</dbReference>
<dbReference type="SMR" id="J7GY56"/>
<dbReference type="GO" id="GO:0005576">
    <property type="term" value="C:extracellular region"/>
    <property type="evidence" value="ECO:0007669"/>
    <property type="project" value="UniProtKB-SubCell"/>
</dbReference>
<dbReference type="GO" id="GO:0035792">
    <property type="term" value="C:host cell postsynaptic membrane"/>
    <property type="evidence" value="ECO:0007669"/>
    <property type="project" value="UniProtKB-KW"/>
</dbReference>
<dbReference type="GO" id="GO:0030550">
    <property type="term" value="F:acetylcholine receptor inhibitor activity"/>
    <property type="evidence" value="ECO:0007669"/>
    <property type="project" value="UniProtKB-KW"/>
</dbReference>
<dbReference type="GO" id="GO:0008200">
    <property type="term" value="F:ion channel inhibitor activity"/>
    <property type="evidence" value="ECO:0007669"/>
    <property type="project" value="InterPro"/>
</dbReference>
<dbReference type="GO" id="GO:0090729">
    <property type="term" value="F:toxin activity"/>
    <property type="evidence" value="ECO:0007669"/>
    <property type="project" value="UniProtKB-KW"/>
</dbReference>
<dbReference type="InterPro" id="IPR004214">
    <property type="entry name" value="Conotoxin"/>
</dbReference>
<dbReference type="Pfam" id="PF02950">
    <property type="entry name" value="Conotoxin"/>
    <property type="match status" value="1"/>
</dbReference>
<sequence>MKLTCVLIITVLFLTACQLTTAVTYSRGEHKHRALMSTGTNYRLPKTCRSSGRYCRSPYDRRRRYCRRITDACV</sequence>
<accession>J7GY56</accession>
<accession>A0A0E3SZW7</accession>
<proteinExistence type="evidence at protein level"/>